<gene>
    <name evidence="1" type="primary">tmem242</name>
    <name type="ORF">si:dkey-60a16.5</name>
</gene>
<organism>
    <name type="scientific">Danio rerio</name>
    <name type="common">Zebrafish</name>
    <name type="synonym">Brachydanio rerio</name>
    <dbReference type="NCBI Taxonomy" id="7955"/>
    <lineage>
        <taxon>Eukaryota</taxon>
        <taxon>Metazoa</taxon>
        <taxon>Chordata</taxon>
        <taxon>Craniata</taxon>
        <taxon>Vertebrata</taxon>
        <taxon>Euteleostomi</taxon>
        <taxon>Actinopterygii</taxon>
        <taxon>Neopterygii</taxon>
        <taxon>Teleostei</taxon>
        <taxon>Ostariophysi</taxon>
        <taxon>Cypriniformes</taxon>
        <taxon>Danionidae</taxon>
        <taxon>Danioninae</taxon>
        <taxon>Danio</taxon>
    </lineage>
</organism>
<accession>Q4V8S3</accession>
<accession>Q5SNY1</accession>
<reference key="1">
    <citation type="journal article" date="2013" name="Nature">
        <title>The zebrafish reference genome sequence and its relationship to the human genome.</title>
        <authorList>
            <person name="Howe K."/>
            <person name="Clark M.D."/>
            <person name="Torroja C.F."/>
            <person name="Torrance J."/>
            <person name="Berthelot C."/>
            <person name="Muffato M."/>
            <person name="Collins J.E."/>
            <person name="Humphray S."/>
            <person name="McLaren K."/>
            <person name="Matthews L."/>
            <person name="McLaren S."/>
            <person name="Sealy I."/>
            <person name="Caccamo M."/>
            <person name="Churcher C."/>
            <person name="Scott C."/>
            <person name="Barrett J.C."/>
            <person name="Koch R."/>
            <person name="Rauch G.J."/>
            <person name="White S."/>
            <person name="Chow W."/>
            <person name="Kilian B."/>
            <person name="Quintais L.T."/>
            <person name="Guerra-Assuncao J.A."/>
            <person name="Zhou Y."/>
            <person name="Gu Y."/>
            <person name="Yen J."/>
            <person name="Vogel J.H."/>
            <person name="Eyre T."/>
            <person name="Redmond S."/>
            <person name="Banerjee R."/>
            <person name="Chi J."/>
            <person name="Fu B."/>
            <person name="Langley E."/>
            <person name="Maguire S.F."/>
            <person name="Laird G.K."/>
            <person name="Lloyd D."/>
            <person name="Kenyon E."/>
            <person name="Donaldson S."/>
            <person name="Sehra H."/>
            <person name="Almeida-King J."/>
            <person name="Loveland J."/>
            <person name="Trevanion S."/>
            <person name="Jones M."/>
            <person name="Quail M."/>
            <person name="Willey D."/>
            <person name="Hunt A."/>
            <person name="Burton J."/>
            <person name="Sims S."/>
            <person name="McLay K."/>
            <person name="Plumb B."/>
            <person name="Davis J."/>
            <person name="Clee C."/>
            <person name="Oliver K."/>
            <person name="Clark R."/>
            <person name="Riddle C."/>
            <person name="Elliot D."/>
            <person name="Threadgold G."/>
            <person name="Harden G."/>
            <person name="Ware D."/>
            <person name="Begum S."/>
            <person name="Mortimore B."/>
            <person name="Kerry G."/>
            <person name="Heath P."/>
            <person name="Phillimore B."/>
            <person name="Tracey A."/>
            <person name="Corby N."/>
            <person name="Dunn M."/>
            <person name="Johnson C."/>
            <person name="Wood J."/>
            <person name="Clark S."/>
            <person name="Pelan S."/>
            <person name="Griffiths G."/>
            <person name="Smith M."/>
            <person name="Glithero R."/>
            <person name="Howden P."/>
            <person name="Barker N."/>
            <person name="Lloyd C."/>
            <person name="Stevens C."/>
            <person name="Harley J."/>
            <person name="Holt K."/>
            <person name="Panagiotidis G."/>
            <person name="Lovell J."/>
            <person name="Beasley H."/>
            <person name="Henderson C."/>
            <person name="Gordon D."/>
            <person name="Auger K."/>
            <person name="Wright D."/>
            <person name="Collins J."/>
            <person name="Raisen C."/>
            <person name="Dyer L."/>
            <person name="Leung K."/>
            <person name="Robertson L."/>
            <person name="Ambridge K."/>
            <person name="Leongamornlert D."/>
            <person name="McGuire S."/>
            <person name="Gilderthorp R."/>
            <person name="Griffiths C."/>
            <person name="Manthravadi D."/>
            <person name="Nichol S."/>
            <person name="Barker G."/>
            <person name="Whitehead S."/>
            <person name="Kay M."/>
            <person name="Brown J."/>
            <person name="Murnane C."/>
            <person name="Gray E."/>
            <person name="Humphries M."/>
            <person name="Sycamore N."/>
            <person name="Barker D."/>
            <person name="Saunders D."/>
            <person name="Wallis J."/>
            <person name="Babbage A."/>
            <person name="Hammond S."/>
            <person name="Mashreghi-Mohammadi M."/>
            <person name="Barr L."/>
            <person name="Martin S."/>
            <person name="Wray P."/>
            <person name="Ellington A."/>
            <person name="Matthews N."/>
            <person name="Ellwood M."/>
            <person name="Woodmansey R."/>
            <person name="Clark G."/>
            <person name="Cooper J."/>
            <person name="Tromans A."/>
            <person name="Grafham D."/>
            <person name="Skuce C."/>
            <person name="Pandian R."/>
            <person name="Andrews R."/>
            <person name="Harrison E."/>
            <person name="Kimberley A."/>
            <person name="Garnett J."/>
            <person name="Fosker N."/>
            <person name="Hall R."/>
            <person name="Garner P."/>
            <person name="Kelly D."/>
            <person name="Bird C."/>
            <person name="Palmer S."/>
            <person name="Gehring I."/>
            <person name="Berger A."/>
            <person name="Dooley C.M."/>
            <person name="Ersan-Urun Z."/>
            <person name="Eser C."/>
            <person name="Geiger H."/>
            <person name="Geisler M."/>
            <person name="Karotki L."/>
            <person name="Kirn A."/>
            <person name="Konantz J."/>
            <person name="Konantz M."/>
            <person name="Oberlander M."/>
            <person name="Rudolph-Geiger S."/>
            <person name="Teucke M."/>
            <person name="Lanz C."/>
            <person name="Raddatz G."/>
            <person name="Osoegawa K."/>
            <person name="Zhu B."/>
            <person name="Rapp A."/>
            <person name="Widaa S."/>
            <person name="Langford C."/>
            <person name="Yang F."/>
            <person name="Schuster S.C."/>
            <person name="Carter N.P."/>
            <person name="Harrow J."/>
            <person name="Ning Z."/>
            <person name="Herrero J."/>
            <person name="Searle S.M."/>
            <person name="Enright A."/>
            <person name="Geisler R."/>
            <person name="Plasterk R.H."/>
            <person name="Lee C."/>
            <person name="Westerfield M."/>
            <person name="de Jong P.J."/>
            <person name="Zon L.I."/>
            <person name="Postlethwait J.H."/>
            <person name="Nusslein-Volhard C."/>
            <person name="Hubbard T.J."/>
            <person name="Roest Crollius H."/>
            <person name="Rogers J."/>
            <person name="Stemple D.L."/>
        </authorList>
    </citation>
    <scope>NUCLEOTIDE SEQUENCE [LARGE SCALE GENOMIC DNA]</scope>
    <source>
        <strain>Tuebingen</strain>
    </source>
</reference>
<reference key="2">
    <citation type="submission" date="2005-06" db="EMBL/GenBank/DDBJ databases">
        <authorList>
            <consortium name="NIH - Zebrafish Gene Collection (ZGC) project"/>
        </authorList>
    </citation>
    <scope>NUCLEOTIDE SEQUENCE [LARGE SCALE MRNA]</scope>
    <source>
        <tissue>Larva</tissue>
    </source>
</reference>
<dbReference type="EMBL" id="AL953887">
    <property type="protein sequence ID" value="CAI11725.1"/>
    <property type="status" value="ALT_INIT"/>
    <property type="molecule type" value="Genomic_DNA"/>
</dbReference>
<dbReference type="EMBL" id="BX649499">
    <property type="protein sequence ID" value="CAI11725.1"/>
    <property type="status" value="JOINED"/>
    <property type="molecule type" value="Genomic_DNA"/>
</dbReference>
<dbReference type="EMBL" id="BX649499">
    <property type="protein sequence ID" value="CAI21177.1"/>
    <property type="status" value="ALT_INIT"/>
    <property type="molecule type" value="Genomic_DNA"/>
</dbReference>
<dbReference type="EMBL" id="AL953887">
    <property type="protein sequence ID" value="CAI21177.1"/>
    <property type="status" value="JOINED"/>
    <property type="molecule type" value="Genomic_DNA"/>
</dbReference>
<dbReference type="EMBL" id="BC097228">
    <property type="protein sequence ID" value="AAH97228.1"/>
    <property type="status" value="ALT_INIT"/>
    <property type="molecule type" value="mRNA"/>
</dbReference>
<dbReference type="RefSeq" id="NP_001153486.1">
    <property type="nucleotide sequence ID" value="NM_001160014.1"/>
</dbReference>
<dbReference type="FunCoup" id="Q4V8S3">
    <property type="interactions" value="980"/>
</dbReference>
<dbReference type="STRING" id="7955.ENSDARP00000053879"/>
<dbReference type="PaxDb" id="7955-ENSDARP00000053879"/>
<dbReference type="Ensembl" id="ENSDART00000053880">
    <property type="protein sequence ID" value="ENSDARP00000053879"/>
    <property type="gene ID" value="ENSDARG00000037070"/>
</dbReference>
<dbReference type="GeneID" id="569632"/>
<dbReference type="KEGG" id="dre:569632"/>
<dbReference type="AGR" id="ZFIN:ZDB-GENE-040724-146"/>
<dbReference type="CTD" id="729515"/>
<dbReference type="ZFIN" id="ZDB-GENE-040724-146">
    <property type="gene designation" value="tmem242"/>
</dbReference>
<dbReference type="eggNOG" id="ENOG502S2GB">
    <property type="taxonomic scope" value="Eukaryota"/>
</dbReference>
<dbReference type="HOGENOM" id="CLU_115460_0_0_1"/>
<dbReference type="InParanoid" id="Q4V8S3"/>
<dbReference type="OMA" id="RSPEWFN"/>
<dbReference type="OrthoDB" id="2378895at2759"/>
<dbReference type="PhylomeDB" id="Q4V8S3"/>
<dbReference type="TreeFam" id="TF323317"/>
<dbReference type="PRO" id="PR:Q4V8S3"/>
<dbReference type="Proteomes" id="UP000000437">
    <property type="component" value="Chromosome 20"/>
</dbReference>
<dbReference type="Bgee" id="ENSDARG00000037070">
    <property type="expression patterns" value="Expressed in heart and 19 other cell types or tissues"/>
</dbReference>
<dbReference type="GO" id="GO:0005743">
    <property type="term" value="C:mitochondrial inner membrane"/>
    <property type="evidence" value="ECO:0007669"/>
    <property type="project" value="UniProtKB-SubCell"/>
</dbReference>
<dbReference type="InterPro" id="IPR009792">
    <property type="entry name" value="TMEM242"/>
</dbReference>
<dbReference type="PANTHER" id="PTHR13141">
    <property type="entry name" value="TRANSMEMBRANE PROTEIN 242"/>
    <property type="match status" value="1"/>
</dbReference>
<dbReference type="PANTHER" id="PTHR13141:SF4">
    <property type="entry name" value="TRANSMEMBRANE PROTEIN 242"/>
    <property type="match status" value="1"/>
</dbReference>
<dbReference type="Pfam" id="PF07096">
    <property type="entry name" value="DUF1358"/>
    <property type="match status" value="1"/>
</dbReference>
<proteinExistence type="evidence at transcript level"/>
<name>TM242_DANRE</name>
<keyword id="KW-0472">Membrane</keyword>
<keyword id="KW-0496">Mitochondrion</keyword>
<keyword id="KW-0999">Mitochondrion inner membrane</keyword>
<keyword id="KW-1185">Reference proteome</keyword>
<keyword id="KW-0812">Transmembrane</keyword>
<keyword id="KW-1133">Transmembrane helix</keyword>
<sequence length="142" mass="14930">MSVEQASASGAVSDIVEDDKSHLIKGGAFLATVATAGMIAGFGATLAVAKKKSPDWFNKGIIGSAAVPESGASLALRALGWGSLYAWCGVGLLSLTIWKAMGVHSLQEFRQKMQSIFPAIPKNEDAQANSVPFDWNSIFKSK</sequence>
<protein>
    <recommendedName>
        <fullName evidence="1">Transmembrane protein 242</fullName>
    </recommendedName>
</protein>
<comment type="function">
    <text evidence="1">Scaffold protein that participates in the c-ring assembly of mitochondrial ATP synthase (F(1)F(0) ATP synthase or complex V) by facilitating the membrane insertion and oligomer formation of the subunit c/ATP5MC3. Participates in the incorporation of the c-ring into vestigial complexes. Additionally influences the incorporation of subunits MT-ATP6, MT-ATP8, ATP5MJ, and ATP5MK in the ATP synthase.</text>
</comment>
<comment type="subcellular location">
    <subcellularLocation>
        <location evidence="1">Mitochondrion inner membrane</location>
        <topology evidence="1">Multi-pass membrane protein</topology>
    </subcellularLocation>
</comment>
<comment type="similarity">
    <text evidence="3">Belongs to the TMEM242 family.</text>
</comment>
<comment type="sequence caution" evidence="3">
    <conflict type="erroneous initiation">
        <sequence resource="EMBL-CDS" id="AAH97228"/>
    </conflict>
    <text>Extended N-terminus.</text>
</comment>
<comment type="sequence caution" evidence="3">
    <conflict type="erroneous initiation">
        <sequence resource="EMBL-CDS" id="CAI11725"/>
    </conflict>
    <text>Extended N-terminus.</text>
</comment>
<comment type="sequence caution" evidence="3">
    <conflict type="erroneous initiation">
        <sequence resource="EMBL-CDS" id="CAI21177"/>
    </conflict>
    <text>Extended N-terminus.</text>
</comment>
<feature type="chain" id="PRO_0000295851" description="Transmembrane protein 242">
    <location>
        <begin position="1"/>
        <end position="142"/>
    </location>
</feature>
<feature type="topological domain" description="Mitochondrial matrix" evidence="1">
    <location>
        <begin position="1"/>
        <end position="27"/>
    </location>
</feature>
<feature type="transmembrane region" description="Helical" evidence="2">
    <location>
        <begin position="28"/>
        <end position="48"/>
    </location>
</feature>
<feature type="topological domain" description="Mitochondrial intermembrane" evidence="1">
    <location>
        <begin position="49"/>
        <end position="77"/>
    </location>
</feature>
<feature type="transmembrane region" description="Helical" evidence="2">
    <location>
        <begin position="78"/>
        <end position="98"/>
    </location>
</feature>
<feature type="topological domain" description="Mitochondrial matrix" evidence="1">
    <location>
        <begin position="99"/>
        <end position="142"/>
    </location>
</feature>
<feature type="sequence conflict" description="In Ref. 2; AAH97228." evidence="3" ref="2">
    <original>A</original>
    <variation>S</variation>
    <location>
        <position position="44"/>
    </location>
</feature>
<evidence type="ECO:0000250" key="1">
    <source>
        <dbReference type="UniProtKB" id="Q9NWH2"/>
    </source>
</evidence>
<evidence type="ECO:0000255" key="2"/>
<evidence type="ECO:0000305" key="3"/>